<keyword id="KW-1048">Host nucleus</keyword>
<keyword id="KW-1185">Reference proteome</keyword>
<keyword id="KW-0231">Viral genome packaging</keyword>
<keyword id="KW-1188">Viral release from host cell</keyword>
<dbReference type="EMBL" id="Z86099">
    <property type="protein sequence ID" value="CAB06758.1"/>
    <property type="molecule type" value="Genomic_DNA"/>
</dbReference>
<dbReference type="RefSeq" id="YP_009137185.1">
    <property type="nucleotide sequence ID" value="NC_001798.2"/>
</dbReference>
<dbReference type="SMR" id="P89456"/>
<dbReference type="DNASU" id="1487319"/>
<dbReference type="GeneID" id="1487319"/>
<dbReference type="KEGG" id="vg:1487319"/>
<dbReference type="Proteomes" id="UP000001874">
    <property type="component" value="Segment"/>
</dbReference>
<dbReference type="GO" id="GO:0042025">
    <property type="term" value="C:host cell nucleus"/>
    <property type="evidence" value="ECO:0007669"/>
    <property type="project" value="UniProtKB-SubCell"/>
</dbReference>
<dbReference type="GO" id="GO:0019073">
    <property type="term" value="P:viral DNA genome packaging"/>
    <property type="evidence" value="ECO:0007669"/>
    <property type="project" value="InterPro"/>
</dbReference>
<dbReference type="HAMAP" id="MF_04015">
    <property type="entry name" value="HSV_TRM2"/>
    <property type="match status" value="1"/>
</dbReference>
<dbReference type="InterPro" id="IPR005208">
    <property type="entry name" value="Herpes_TT2"/>
</dbReference>
<dbReference type="Pfam" id="PF03581">
    <property type="entry name" value="Herpes_UL33"/>
    <property type="match status" value="1"/>
</dbReference>
<organismHost>
    <name type="scientific">Homo sapiens</name>
    <name type="common">Human</name>
    <dbReference type="NCBI Taxonomy" id="9606"/>
</organismHost>
<reference key="1">
    <citation type="journal article" date="1991" name="J. Gen. Virol.">
        <title>Comparative sequence analysis of the long repeat regions and adjoining parts of the long unique regions in the genomes of herpes simplex viruses types 1 and 2.</title>
        <authorList>
            <person name="McGeoch D.J."/>
            <person name="Cunningham C."/>
            <person name="McIntyre G."/>
            <person name="Dolan A."/>
        </authorList>
    </citation>
    <scope>NUCLEOTIDE SEQUENCE [LARGE SCALE GENOMIC DNA]</scope>
</reference>
<reference key="2">
    <citation type="journal article" date="2001" name="J. Gen. Virol.">
        <title>The UL14 protein of herpes simplex virus type 2 translocates the minor capsid protein VP26 and the DNA cleavage and packaging UL33 protein into the nucleus of coexpressing cells.</title>
        <authorList>
            <person name="Yamauchi Y."/>
            <person name="Wada K."/>
            <person name="Goshima F."/>
            <person name="Takakuwa H."/>
            <person name="Daikoku T."/>
            <person name="Yamada M."/>
            <person name="Nishiyama Y."/>
        </authorList>
    </citation>
    <scope>SUBCELLULAR LOCATION</scope>
</reference>
<accession>P89456</accession>
<sequence>MAGRAGRTRPRTLRDAIPDCALRSQTLESLDARYVSRDGAGDAAVWFEDMTPAELEVIFPTTDAKLNYLSRTQRLASLLTYAGPIKAPDGPAAPHTQDTACVHGELLARKRERFAAVINRFLDLHQILRG</sequence>
<feature type="chain" id="PRO_0000406181" description="Tripartite terminase subunit 2">
    <location>
        <begin position="1"/>
        <end position="130"/>
    </location>
</feature>
<organism>
    <name type="scientific">Human herpesvirus 2 (strain HG52)</name>
    <name type="common">HHV-2</name>
    <name type="synonym">Human herpes simplex virus 2</name>
    <dbReference type="NCBI Taxonomy" id="10315"/>
    <lineage>
        <taxon>Viruses</taxon>
        <taxon>Duplodnaviria</taxon>
        <taxon>Heunggongvirae</taxon>
        <taxon>Peploviricota</taxon>
        <taxon>Herviviricetes</taxon>
        <taxon>Herpesvirales</taxon>
        <taxon>Orthoherpesviridae</taxon>
        <taxon>Alphaherpesvirinae</taxon>
        <taxon>Simplexvirus</taxon>
        <taxon>Simplexvirus humanalpha2</taxon>
        <taxon>Human herpesvirus 2</taxon>
    </lineage>
</organism>
<comment type="function">
    <text evidence="1">Component of the molecular motor that translocates viral genomic DNA in empty capsid during DNA packaging. Forms a tripartite terminase complex together with TRM1 and TRM3 in the host cytoplasm. Once the complex reaches the host nucleus, it interacts with the capsid portal vertex. This portal forms a ring in which genomic DNA is translocated into the capsid.</text>
</comment>
<comment type="subunit">
    <text evidence="1">Associates with TRM1 and TRM3 to form the tripartite terminase complex.</text>
</comment>
<comment type="subcellular location">
    <subcellularLocation>
        <location evidence="1 2">Host nucleus</location>
    </subcellularLocation>
    <text evidence="1">Found associated with the external surface of the viral capsid during assembly and DNA packaging, but seems absent in extracellular mature virions.</text>
</comment>
<comment type="similarity">
    <text evidence="1">Belongs to the herpesviridae TRM2 protein family.</text>
</comment>
<evidence type="ECO:0000255" key="1">
    <source>
        <dbReference type="HAMAP-Rule" id="MF_04015"/>
    </source>
</evidence>
<evidence type="ECO:0000269" key="2">
    <source>
    </source>
</evidence>
<name>TRM2_HHV2H</name>
<gene>
    <name evidence="1" type="primary">TRM2</name>
    <name type="ordered locus">UL33</name>
</gene>
<protein>
    <recommendedName>
        <fullName evidence="1">Tripartite terminase subunit 2</fullName>
    </recommendedName>
</protein>
<proteinExistence type="inferred from homology"/>